<dbReference type="EMBL" id="CU329670">
    <property type="protein sequence ID" value="CAB10099.1"/>
    <property type="molecule type" value="Genomic_DNA"/>
</dbReference>
<dbReference type="PIR" id="T37702">
    <property type="entry name" value="T37702"/>
</dbReference>
<dbReference type="RefSeq" id="NP_594289.1">
    <property type="nucleotide sequence ID" value="NM_001019712.2"/>
</dbReference>
<dbReference type="SMR" id="O13722"/>
<dbReference type="BioGRID" id="279234">
    <property type="interactions" value="11"/>
</dbReference>
<dbReference type="FunCoup" id="O13722">
    <property type="interactions" value="62"/>
</dbReference>
<dbReference type="IntAct" id="O13722">
    <property type="interactions" value="2"/>
</dbReference>
<dbReference type="MINT" id="O13722"/>
<dbReference type="STRING" id="284812.O13722"/>
<dbReference type="iPTMnet" id="O13722"/>
<dbReference type="PaxDb" id="4896-SPAC15A10.02.1"/>
<dbReference type="EnsemblFungi" id="SPAC15A10.02.1">
    <property type="protein sequence ID" value="SPAC15A10.02.1:pep"/>
    <property type="gene ID" value="SPAC15A10.02"/>
</dbReference>
<dbReference type="GeneID" id="2542785"/>
<dbReference type="KEGG" id="spo:2542785"/>
<dbReference type="PomBase" id="SPAC15A10.02">
    <property type="gene designation" value="taf12"/>
</dbReference>
<dbReference type="VEuPathDB" id="FungiDB:SPAC15A10.02"/>
<dbReference type="eggNOG" id="KOG1142">
    <property type="taxonomic scope" value="Eukaryota"/>
</dbReference>
<dbReference type="HOGENOM" id="CLU_645771_0_0_1"/>
<dbReference type="InParanoid" id="O13722"/>
<dbReference type="OMA" id="RAPHYEL"/>
<dbReference type="Reactome" id="R-SPO-674695">
    <property type="pathway name" value="RNA Polymerase II Pre-transcription Events"/>
</dbReference>
<dbReference type="Reactome" id="R-SPO-73776">
    <property type="pathway name" value="RNA Polymerase II Promoter Escape"/>
</dbReference>
<dbReference type="Reactome" id="R-SPO-73779">
    <property type="pathway name" value="RNA Polymerase II Transcription Pre-Initiation And Promoter Opening"/>
</dbReference>
<dbReference type="Reactome" id="R-SPO-75953">
    <property type="pathway name" value="RNA Polymerase II Transcription Initiation"/>
</dbReference>
<dbReference type="Reactome" id="R-SPO-76042">
    <property type="pathway name" value="RNA Polymerase II Transcription Initiation And Promoter Clearance"/>
</dbReference>
<dbReference type="PRO" id="PR:O13722"/>
<dbReference type="Proteomes" id="UP000002485">
    <property type="component" value="Chromosome I"/>
</dbReference>
<dbReference type="GO" id="GO:0005634">
    <property type="term" value="C:nucleus"/>
    <property type="evidence" value="ECO:0007005"/>
    <property type="project" value="PomBase"/>
</dbReference>
<dbReference type="GO" id="GO:0000124">
    <property type="term" value="C:SAGA complex"/>
    <property type="evidence" value="ECO:0000314"/>
    <property type="project" value="PomBase"/>
</dbReference>
<dbReference type="GO" id="GO:0005669">
    <property type="term" value="C:transcription factor TFIID complex"/>
    <property type="evidence" value="ECO:0000314"/>
    <property type="project" value="PomBase"/>
</dbReference>
<dbReference type="GO" id="GO:0003677">
    <property type="term" value="F:DNA binding"/>
    <property type="evidence" value="ECO:0000318"/>
    <property type="project" value="GO_Central"/>
</dbReference>
<dbReference type="GO" id="GO:0046982">
    <property type="term" value="F:protein heterodimerization activity"/>
    <property type="evidence" value="ECO:0007669"/>
    <property type="project" value="InterPro"/>
</dbReference>
<dbReference type="GO" id="GO:0016251">
    <property type="term" value="F:RNA polymerase II general transcription initiation factor activity"/>
    <property type="evidence" value="ECO:0000269"/>
    <property type="project" value="PomBase"/>
</dbReference>
<dbReference type="GO" id="GO:0017025">
    <property type="term" value="F:TBP-class protein binding"/>
    <property type="evidence" value="ECO:0000318"/>
    <property type="project" value="GO_Central"/>
</dbReference>
<dbReference type="GO" id="GO:0045893">
    <property type="term" value="P:positive regulation of DNA-templated transcription"/>
    <property type="evidence" value="ECO:0007669"/>
    <property type="project" value="GOC"/>
</dbReference>
<dbReference type="GO" id="GO:0051123">
    <property type="term" value="P:RNA polymerase II preinitiation complex assembly"/>
    <property type="evidence" value="ECO:0000318"/>
    <property type="project" value="GO_Central"/>
</dbReference>
<dbReference type="GO" id="GO:0006367">
    <property type="term" value="P:transcription initiation at RNA polymerase II promoter"/>
    <property type="evidence" value="ECO:0000269"/>
    <property type="project" value="PomBase"/>
</dbReference>
<dbReference type="GO" id="GO:0045815">
    <property type="term" value="P:transcription initiation-coupled chromatin remodeling"/>
    <property type="evidence" value="ECO:0000305"/>
    <property type="project" value="PomBase"/>
</dbReference>
<dbReference type="CDD" id="cd07981">
    <property type="entry name" value="HFD_TAF12"/>
    <property type="match status" value="1"/>
</dbReference>
<dbReference type="FunFam" id="1.10.20.10:FF:000011">
    <property type="entry name" value="Transcription initiation factor TFIID subunit 12"/>
    <property type="match status" value="1"/>
</dbReference>
<dbReference type="Gene3D" id="1.10.20.10">
    <property type="entry name" value="Histone, subunit A"/>
    <property type="match status" value="1"/>
</dbReference>
<dbReference type="InterPro" id="IPR009072">
    <property type="entry name" value="Histone-fold"/>
</dbReference>
<dbReference type="InterPro" id="IPR037794">
    <property type="entry name" value="TAF12"/>
</dbReference>
<dbReference type="InterPro" id="IPR003228">
    <property type="entry name" value="TFIID_TAF12_dom"/>
</dbReference>
<dbReference type="PANTHER" id="PTHR12264">
    <property type="entry name" value="TRANSCRIPTION INITIATION FACTOR TFIID SUBUNIT 12"/>
    <property type="match status" value="1"/>
</dbReference>
<dbReference type="PANTHER" id="PTHR12264:SF21">
    <property type="entry name" value="TRANSCRIPTION INITIATION FACTOR TFIID SUBUNIT 12"/>
    <property type="match status" value="1"/>
</dbReference>
<dbReference type="Pfam" id="PF03847">
    <property type="entry name" value="TFIID_20kDa"/>
    <property type="match status" value="1"/>
</dbReference>
<dbReference type="SUPFAM" id="SSF47113">
    <property type="entry name" value="Histone-fold"/>
    <property type="match status" value="1"/>
</dbReference>
<reference evidence="9" key="1">
    <citation type="journal article" date="2002" name="Nature">
        <title>The genome sequence of Schizosaccharomyces pombe.</title>
        <authorList>
            <person name="Wood V."/>
            <person name="Gwilliam R."/>
            <person name="Rajandream M.A."/>
            <person name="Lyne M.H."/>
            <person name="Lyne R."/>
            <person name="Stewart A."/>
            <person name="Sgouros J.G."/>
            <person name="Peat N."/>
            <person name="Hayles J."/>
            <person name="Baker S.G."/>
            <person name="Basham D."/>
            <person name="Bowman S."/>
            <person name="Brooks K."/>
            <person name="Brown D."/>
            <person name="Brown S."/>
            <person name="Chillingworth T."/>
            <person name="Churcher C.M."/>
            <person name="Collins M."/>
            <person name="Connor R."/>
            <person name="Cronin A."/>
            <person name="Davis P."/>
            <person name="Feltwell T."/>
            <person name="Fraser A."/>
            <person name="Gentles S."/>
            <person name="Goble A."/>
            <person name="Hamlin N."/>
            <person name="Harris D.E."/>
            <person name="Hidalgo J."/>
            <person name="Hodgson G."/>
            <person name="Holroyd S."/>
            <person name="Hornsby T."/>
            <person name="Howarth S."/>
            <person name="Huckle E.J."/>
            <person name="Hunt S."/>
            <person name="Jagels K."/>
            <person name="James K.D."/>
            <person name="Jones L."/>
            <person name="Jones M."/>
            <person name="Leather S."/>
            <person name="McDonald S."/>
            <person name="McLean J."/>
            <person name="Mooney P."/>
            <person name="Moule S."/>
            <person name="Mungall K.L."/>
            <person name="Murphy L.D."/>
            <person name="Niblett D."/>
            <person name="Odell C."/>
            <person name="Oliver K."/>
            <person name="O'Neil S."/>
            <person name="Pearson D."/>
            <person name="Quail M.A."/>
            <person name="Rabbinowitsch E."/>
            <person name="Rutherford K.M."/>
            <person name="Rutter S."/>
            <person name="Saunders D."/>
            <person name="Seeger K."/>
            <person name="Sharp S."/>
            <person name="Skelton J."/>
            <person name="Simmonds M.N."/>
            <person name="Squares R."/>
            <person name="Squares S."/>
            <person name="Stevens K."/>
            <person name="Taylor K."/>
            <person name="Taylor R.G."/>
            <person name="Tivey A."/>
            <person name="Walsh S.V."/>
            <person name="Warren T."/>
            <person name="Whitehead S."/>
            <person name="Woodward J.R."/>
            <person name="Volckaert G."/>
            <person name="Aert R."/>
            <person name="Robben J."/>
            <person name="Grymonprez B."/>
            <person name="Weltjens I."/>
            <person name="Vanstreels E."/>
            <person name="Rieger M."/>
            <person name="Schaefer M."/>
            <person name="Mueller-Auer S."/>
            <person name="Gabel C."/>
            <person name="Fuchs M."/>
            <person name="Duesterhoeft A."/>
            <person name="Fritzc C."/>
            <person name="Holzer E."/>
            <person name="Moestl D."/>
            <person name="Hilbert H."/>
            <person name="Borzym K."/>
            <person name="Langer I."/>
            <person name="Beck A."/>
            <person name="Lehrach H."/>
            <person name="Reinhardt R."/>
            <person name="Pohl T.M."/>
            <person name="Eger P."/>
            <person name="Zimmermann W."/>
            <person name="Wedler H."/>
            <person name="Wambutt R."/>
            <person name="Purnelle B."/>
            <person name="Goffeau A."/>
            <person name="Cadieu E."/>
            <person name="Dreano S."/>
            <person name="Gloux S."/>
            <person name="Lelaure V."/>
            <person name="Mottier S."/>
            <person name="Galibert F."/>
            <person name="Aves S.J."/>
            <person name="Xiang Z."/>
            <person name="Hunt C."/>
            <person name="Moore K."/>
            <person name="Hurst S.M."/>
            <person name="Lucas M."/>
            <person name="Rochet M."/>
            <person name="Gaillardin C."/>
            <person name="Tallada V.A."/>
            <person name="Garzon A."/>
            <person name="Thode G."/>
            <person name="Daga R.R."/>
            <person name="Cruzado L."/>
            <person name="Jimenez J."/>
            <person name="Sanchez M."/>
            <person name="del Rey F."/>
            <person name="Benito J."/>
            <person name="Dominguez A."/>
            <person name="Revuelta J.L."/>
            <person name="Moreno S."/>
            <person name="Armstrong J."/>
            <person name="Forsburg S.L."/>
            <person name="Cerutti L."/>
            <person name="Lowe T."/>
            <person name="McCombie W.R."/>
            <person name="Paulsen I."/>
            <person name="Potashkin J."/>
            <person name="Shpakovski G.V."/>
            <person name="Ussery D."/>
            <person name="Barrell B.G."/>
            <person name="Nurse P."/>
        </authorList>
    </citation>
    <scope>NUCLEOTIDE SEQUENCE [LARGE SCALE GENOMIC DNA]</scope>
    <source>
        <strain>972 / ATCC 24843</strain>
    </source>
</reference>
<reference evidence="8" key="2">
    <citation type="journal article" date="2006" name="Nat. Biotechnol.">
        <title>ORFeome cloning and global analysis of protein localization in the fission yeast Schizosaccharomyces pombe.</title>
        <authorList>
            <person name="Matsuyama A."/>
            <person name="Arai R."/>
            <person name="Yashiroda Y."/>
            <person name="Shirai A."/>
            <person name="Kamata A."/>
            <person name="Sekido S."/>
            <person name="Kobayashi Y."/>
            <person name="Hashimoto A."/>
            <person name="Hamamoto M."/>
            <person name="Hiraoka Y."/>
            <person name="Horinouchi S."/>
            <person name="Yoshida M."/>
        </authorList>
    </citation>
    <scope>SUBCELLULAR LOCATION [LARGE SCALE ANALYSIS]</scope>
</reference>
<reference key="3">
    <citation type="journal article" date="2008" name="Genes Dev.">
        <title>The S. pombe SAGA complex controls the switch from proliferation to sexual differentiation through the opposing roles of its subunits Gcn5 and Spt8.</title>
        <authorList>
            <person name="Helmlinger D."/>
            <person name="Marguerat S."/>
            <person name="Villen J."/>
            <person name="Gygi S.P."/>
            <person name="Bahler J."/>
            <person name="Winston F."/>
        </authorList>
    </citation>
    <scope>IDENTIFICATION IN THE SAGA COMPLEX</scope>
    <scope>IDENTIFICATION BY MASS SPECTROMETRY</scope>
</reference>
<reference key="4">
    <citation type="journal article" date="2008" name="J. Proteome Res.">
        <title>Phosphoproteome analysis of fission yeast.</title>
        <authorList>
            <person name="Wilson-Grady J.T."/>
            <person name="Villen J."/>
            <person name="Gygi S.P."/>
        </authorList>
    </citation>
    <scope>PHOSPHORYLATION [LARGE SCALE ANALYSIS] AT SER-297</scope>
    <scope>IDENTIFICATION BY MASS SPECTROMETRY</scope>
</reference>
<reference key="5">
    <citation type="journal article" date="2009" name="Structure">
        <title>Cryo-EM reveals promoter DNA binding and conformational flexibility of the general transcription factor TFIID.</title>
        <authorList>
            <person name="Elmlund H."/>
            <person name="Baraznenok V."/>
            <person name="Linder T."/>
            <person name="Szilagyi Z."/>
            <person name="Rofougaran R."/>
            <person name="Hofer A."/>
            <person name="Hebert H."/>
            <person name="Lindahl M."/>
            <person name="Gustafsson C.M."/>
        </authorList>
    </citation>
    <scope>STRUCTURE BY ELECTRON MICROSCOPY OF TFIID</scope>
</reference>
<keyword id="KW-0539">Nucleus</keyword>
<keyword id="KW-0597">Phosphoprotein</keyword>
<keyword id="KW-1185">Reference proteome</keyword>
<keyword id="KW-0804">Transcription</keyword>
<keyword id="KW-0805">Transcription regulation</keyword>
<gene>
    <name evidence="9" type="primary">taf12</name>
    <name type="ORF">SPAC15A10.02</name>
</gene>
<comment type="function">
    <text evidence="1">Functions as a component of both the DNA-binding general transcription initiation factor complex TFIID and the transcription coactivator SAGA complex. Binding of TFIID to a promoter (with or without TATA element) is the initial step in pre-initiation complex (PIC) formation. TFIID plays a key role in the regulation of gene expression by RNA polymerase II through different activities such as transcription activator interaction, core promoter recognition and selectivity, TFIIA and TFIIB interaction, chromatin modification (histone acetylation by TAF1), facilitation of DNA opening and initiation of transcription. SAGA acts as a general cofactor required for essentially all RNA polymerase II transcription. At the promoters, SAGA is required for transcription pre-initiation complex (PIC) recruitment. It influences RNA polymerase II transcriptional activity through different activities such as TBP interaction (via core/TAF module) and promoter selectivity, interaction with transcription activators (via Tra1/SPT module), and chromatin modification through histone acetylation (via HAT module) and deubiquitination (via DUB module). SAGA preferentially acetylates histones H3 (to form H3K9ac, H3K14ac, H3K18ac and H3K23ac) and H2B and deubiquitinates histone H2B. SAGA interacts with DNA via upstream activating sequences (UASs).</text>
</comment>
<comment type="subunit">
    <text evidence="1 6 7">Component of the 1.8 MDa SAGA (Spt-Ada-Gcn5 acetyltransferase) complex, which is composed of 19 subunits tra1, spt7, taf5, ngg1/ada3, sgf73, spt20, spt8, taf12, taf6, hfi1/ada1, ubp8, gcn5, ada2, spt3, sgf29, taf10, taf9, sgf11 and sus1 (PubMed:19056896). The SAGA complex is composed of 4 modules, namely the HAT (histone acetyltransferase) module (gcn5, ada2, ngg1/ada3 and sgf29), the DUB (deubiquitinating) module (ubp8, sgf11, sgf73 and sus1), the core or TAF (TBP-associated factor) module (taf5, taf6, taf9, taf10 and taf12), and the Tra1 or SPT (Suppressor of Ty) module (tra1, hfi1/ada1, spt3, spt7, spt8 and spt20). The Tra1/SPT module binds activators, the core module recruits TBP (TATA-binding protein), the HAT module contains the histone H3 acetyltransferase gcn5, and the DUB module comprises the histone H2B deubiquitinase ubp8 (By similarity). Component of the 1.2 MDa TFIID complex, which is composed of TATA-binding protein (TBP) and the 14 TBP-associated factors (TAFs) (PubMed:19913479). It comprises 1 copy of each taf1, taf2, taf3, taf7, taf8, taf11, taf13, 2 copies of each taf4, taf5, taf6, taf9, taf10, taf12, and 3 copies of taf14. In TFIID, taf12 heterodimerizes with taf4, forming ultimately an octamer consisting of a taf6-taf9 heterotetramer core flanked by taf4-taf12 dimers on either side, similar to the histone H2A-H2B-H3-H4 octamer (By similarity).</text>
</comment>
<comment type="subcellular location">
    <subcellularLocation>
        <location evidence="4">Nucleus</location>
    </subcellularLocation>
</comment>
<comment type="similarity">
    <text evidence="2">Belongs to the TAF12 family.</text>
</comment>
<name>TAF12_SCHPO</name>
<protein>
    <recommendedName>
        <fullName>SAGA complex/transcription factor TFIID complex subunit Taf12</fullName>
    </recommendedName>
    <alternativeName>
        <fullName>TBP-associated factor 12</fullName>
    </alternativeName>
    <alternativeName>
        <fullName>Transcription initiation factor TFIID subunit 12</fullName>
    </alternativeName>
</protein>
<feature type="chain" id="PRO_0000326091" description="SAGA complex/transcription factor TFIID complex subunit Taf12">
    <location>
        <begin position="1"/>
        <end position="450"/>
    </location>
</feature>
<feature type="domain" description="Histone-fold" evidence="2">
    <location>
        <begin position="338"/>
        <end position="413"/>
    </location>
</feature>
<feature type="region of interest" description="Disordered" evidence="3">
    <location>
        <begin position="1"/>
        <end position="29"/>
    </location>
</feature>
<feature type="region of interest" description="Disordered" evidence="3">
    <location>
        <begin position="190"/>
        <end position="281"/>
    </location>
</feature>
<feature type="region of interest" description="Disordered" evidence="3">
    <location>
        <begin position="426"/>
        <end position="450"/>
    </location>
</feature>
<feature type="compositionally biased region" description="Polar residues" evidence="3">
    <location>
        <begin position="1"/>
        <end position="10"/>
    </location>
</feature>
<feature type="compositionally biased region" description="Polar residues" evidence="3">
    <location>
        <begin position="19"/>
        <end position="29"/>
    </location>
</feature>
<feature type="compositionally biased region" description="Polar residues" evidence="3">
    <location>
        <begin position="190"/>
        <end position="212"/>
    </location>
</feature>
<feature type="compositionally biased region" description="Low complexity" evidence="3">
    <location>
        <begin position="217"/>
        <end position="236"/>
    </location>
</feature>
<feature type="compositionally biased region" description="Polar residues" evidence="3">
    <location>
        <begin position="237"/>
        <end position="246"/>
    </location>
</feature>
<feature type="compositionally biased region" description="Polar residues" evidence="3">
    <location>
        <begin position="255"/>
        <end position="281"/>
    </location>
</feature>
<feature type="compositionally biased region" description="Polar residues" evidence="3">
    <location>
        <begin position="430"/>
        <end position="441"/>
    </location>
</feature>
<feature type="modified residue" description="Phosphoserine" evidence="5">
    <location>
        <position position="297"/>
    </location>
</feature>
<evidence type="ECO:0000250" key="1">
    <source>
        <dbReference type="UniProtKB" id="Q03761"/>
    </source>
</evidence>
<evidence type="ECO:0000255" key="2"/>
<evidence type="ECO:0000256" key="3">
    <source>
        <dbReference type="SAM" id="MobiDB-lite"/>
    </source>
</evidence>
<evidence type="ECO:0000269" key="4">
    <source>
    </source>
</evidence>
<evidence type="ECO:0000269" key="5">
    <source>
    </source>
</evidence>
<evidence type="ECO:0000269" key="6">
    <source>
    </source>
</evidence>
<evidence type="ECO:0000269" key="7">
    <source>
    </source>
</evidence>
<evidence type="ECO:0000305" key="8"/>
<evidence type="ECO:0000312" key="9">
    <source>
        <dbReference type="EMBL" id="CAB10099.1"/>
    </source>
</evidence>
<accession>O13722</accession>
<organism>
    <name type="scientific">Schizosaccharomyces pombe (strain 972 / ATCC 24843)</name>
    <name type="common">Fission yeast</name>
    <dbReference type="NCBI Taxonomy" id="284812"/>
    <lineage>
        <taxon>Eukaryota</taxon>
        <taxon>Fungi</taxon>
        <taxon>Dikarya</taxon>
        <taxon>Ascomycota</taxon>
        <taxon>Taphrinomycotina</taxon>
        <taxon>Schizosaccharomycetes</taxon>
        <taxon>Schizosaccharomycetales</taxon>
        <taxon>Schizosaccharomycetaceae</taxon>
        <taxon>Schizosaccharomyces</taxon>
    </lineage>
</organism>
<sequence length="450" mass="49196">MNGQHSSPGTPVQRPSAGPVNQAQFSQQRTNQLTSLLHTMTMYQQLAQNVGLNTPQGQVYLLQAQTIRRQLQGHAQSGQLPNQQLLQQLQSNGALQQGTPEPSNTRPRPQLNAQEQTMLLVRHRQLQTAQNYLTEMKEALGRIKNELSTNERLDTSAREALVKQESELTVKIAQFTAAISNGIRSIQQLQNRQASSANGNNTGTSTPVNASTDTRKSTASTPQLQQTQAQANAPQQRINPETSSVPETPVGVSAANVSNESTELATSATQQSGLANNVEKSQTPSYMSANHLPKVDSKSPIPFSVPPSRATLTGGYASGSIGLSTPGLSRAPHYELDNGNRLLSKRKLHDLLQQIDSEEKIEPEVEELLLEIADEFVESVTNFACRLAKHRKSDTLDVRDVQLHLERNWNIRLPGFASDDIVKSARKTGPTPSYQQKQNAIGTAKSLNKD</sequence>
<proteinExistence type="evidence at protein level"/>